<feature type="chain" id="PRO_0000065800" description="Uncharacterized protein ORF6">
    <location>
        <begin position="1"/>
        <end position="71"/>
    </location>
</feature>
<reference key="1">
    <citation type="journal article" date="1987" name="J. Bacteriol.">
        <title>Spiroplasma virus 4: nucleotide sequence of the viral DNA, regulatory signals, and proposed genome organization.</title>
        <authorList>
            <person name="Renaudin J."/>
            <person name="Pascarel M.-C."/>
            <person name="Bove J.-M."/>
        </authorList>
    </citation>
    <scope>NUCLEOTIDE SEQUENCE [GENOMIC DNA]</scope>
</reference>
<gene>
    <name type="ORF">ORF6</name>
</gene>
<dbReference type="EMBL" id="M17988">
    <property type="status" value="NOT_ANNOTATED_CDS"/>
    <property type="molecule type" value="Genomic_DNA"/>
</dbReference>
<dbReference type="PIR" id="C29825">
    <property type="entry name" value="G6BPSV"/>
</dbReference>
<dbReference type="SMR" id="P11338"/>
<dbReference type="Proteomes" id="UP000002101">
    <property type="component" value="Genome"/>
</dbReference>
<sequence length="71" mass="8520">MKLSKKKMQRIDNTLEKLFEWSHLNGYDNWLTNQLALEKEIEQGYRCETCKLVIKSVNKDEIVCKCINEKR</sequence>
<keyword id="KW-1185">Reference proteome</keyword>
<accession>P11338</accession>
<organism>
    <name type="scientific">Spiroplasma virus 4</name>
    <name type="common">SpV4</name>
    <dbReference type="NCBI Taxonomy" id="2928746"/>
    <lineage>
        <taxon>Viruses</taxon>
        <taxon>Monodnaviria</taxon>
        <taxon>Sangervirae</taxon>
        <taxon>Phixviricota</taxon>
        <taxon>Malgrandaviricetes</taxon>
        <taxon>Petitvirales</taxon>
        <taxon>Microviridae</taxon>
        <taxon>Gokushovirinae</taxon>
        <taxon>Spiromicrovirus</taxon>
        <taxon>Spiromicrovirus SpV4</taxon>
    </lineage>
</organism>
<name>ORF6_SPV4</name>
<proteinExistence type="predicted"/>
<organismHost>
    <name type="scientific">Spiroplasma melliferum</name>
    <dbReference type="NCBI Taxonomy" id="2134"/>
</organismHost>
<protein>
    <recommendedName>
        <fullName>Uncharacterized protein ORF6</fullName>
    </recommendedName>
</protein>